<organism>
    <name type="scientific">Shewanella piezotolerans (strain WP3 / JCM 13877)</name>
    <dbReference type="NCBI Taxonomy" id="225849"/>
    <lineage>
        <taxon>Bacteria</taxon>
        <taxon>Pseudomonadati</taxon>
        <taxon>Pseudomonadota</taxon>
        <taxon>Gammaproteobacteria</taxon>
        <taxon>Alteromonadales</taxon>
        <taxon>Shewanellaceae</taxon>
        <taxon>Shewanella</taxon>
    </lineage>
</organism>
<sequence>MSQFNNSPVLALAKDLISRPSVTPLDEGCQTLMADRLKDAGFNIEDMVFEDTTNMWARKGTQSPVFCFAGHTDVVPVGDLNRWHTPPFEPVVIDDYLHGRGAADMKGSLAAMVVATERFVKKHPDHKGSIAFLITSDEEGPFINGTTRVIDTLEARNEKITWSLVGEPSSTHKLGDIVKNGRRGSLTGNLTVKGMQGHVAYPHLADNPIHKASPALDELARMKWDNGNEFFPPTSFQIANINGGTGASNVIPGTLEVMFNFRYSTEVTAEILIERVLNILDAHGLDYDINWIFNGLPFLTGDGPLLDATRDAIKKVTGLDTDPQTSGGTSDGRFIAPTGAHVLELGPVNATIHKVNECVKVSDLEQLTLCYEAILENLLCQ</sequence>
<gene>
    <name evidence="1" type="primary">dapE</name>
    <name type="ordered locus">swp_2698</name>
</gene>
<reference key="1">
    <citation type="journal article" date="2008" name="PLoS ONE">
        <title>Environmental adaptation: genomic analysis of the piezotolerant and psychrotolerant deep-sea iron reducing bacterium Shewanella piezotolerans WP3.</title>
        <authorList>
            <person name="Wang F."/>
            <person name="Wang J."/>
            <person name="Jian H."/>
            <person name="Zhang B."/>
            <person name="Li S."/>
            <person name="Wang F."/>
            <person name="Zeng X."/>
            <person name="Gao L."/>
            <person name="Bartlett D.H."/>
            <person name="Yu J."/>
            <person name="Hu S."/>
            <person name="Xiao X."/>
        </authorList>
    </citation>
    <scope>NUCLEOTIDE SEQUENCE [LARGE SCALE GENOMIC DNA]</scope>
    <source>
        <strain>WP3 / JCM 13877</strain>
    </source>
</reference>
<protein>
    <recommendedName>
        <fullName evidence="1">Succinyl-diaminopimelate desuccinylase</fullName>
        <shortName evidence="1">SDAP desuccinylase</shortName>
        <ecNumber evidence="1">3.5.1.18</ecNumber>
    </recommendedName>
    <alternativeName>
        <fullName evidence="1">N-succinyl-LL-2,6-diaminoheptanedioate amidohydrolase</fullName>
    </alternativeName>
</protein>
<keyword id="KW-0028">Amino-acid biosynthesis</keyword>
<keyword id="KW-0170">Cobalt</keyword>
<keyword id="KW-0220">Diaminopimelate biosynthesis</keyword>
<keyword id="KW-0378">Hydrolase</keyword>
<keyword id="KW-0457">Lysine biosynthesis</keyword>
<keyword id="KW-0479">Metal-binding</keyword>
<keyword id="KW-0862">Zinc</keyword>
<evidence type="ECO:0000255" key="1">
    <source>
        <dbReference type="HAMAP-Rule" id="MF_01690"/>
    </source>
</evidence>
<feature type="chain" id="PRO_0000375737" description="Succinyl-diaminopimelate desuccinylase">
    <location>
        <begin position="1"/>
        <end position="381"/>
    </location>
</feature>
<feature type="active site" evidence="1">
    <location>
        <position position="73"/>
    </location>
</feature>
<feature type="active site" description="Proton acceptor" evidence="1">
    <location>
        <position position="138"/>
    </location>
</feature>
<feature type="binding site" evidence="1">
    <location>
        <position position="71"/>
    </location>
    <ligand>
        <name>Zn(2+)</name>
        <dbReference type="ChEBI" id="CHEBI:29105"/>
        <label>1</label>
    </ligand>
</feature>
<feature type="binding site" evidence="1">
    <location>
        <position position="104"/>
    </location>
    <ligand>
        <name>Zn(2+)</name>
        <dbReference type="ChEBI" id="CHEBI:29105"/>
        <label>1</label>
    </ligand>
</feature>
<feature type="binding site" evidence="1">
    <location>
        <position position="104"/>
    </location>
    <ligand>
        <name>Zn(2+)</name>
        <dbReference type="ChEBI" id="CHEBI:29105"/>
        <label>2</label>
    </ligand>
</feature>
<feature type="binding site" evidence="1">
    <location>
        <position position="139"/>
    </location>
    <ligand>
        <name>Zn(2+)</name>
        <dbReference type="ChEBI" id="CHEBI:29105"/>
        <label>2</label>
    </ligand>
</feature>
<feature type="binding site" evidence="1">
    <location>
        <position position="167"/>
    </location>
    <ligand>
        <name>Zn(2+)</name>
        <dbReference type="ChEBI" id="CHEBI:29105"/>
        <label>1</label>
    </ligand>
</feature>
<feature type="binding site" evidence="1">
    <location>
        <position position="353"/>
    </location>
    <ligand>
        <name>Zn(2+)</name>
        <dbReference type="ChEBI" id="CHEBI:29105"/>
        <label>2</label>
    </ligand>
</feature>
<name>DAPE_SHEPW</name>
<dbReference type="EC" id="3.5.1.18" evidence="1"/>
<dbReference type="EMBL" id="CP000472">
    <property type="protein sequence ID" value="ACJ29430.1"/>
    <property type="molecule type" value="Genomic_DNA"/>
</dbReference>
<dbReference type="RefSeq" id="WP_020912786.1">
    <property type="nucleotide sequence ID" value="NC_011566.1"/>
</dbReference>
<dbReference type="SMR" id="B8CMP0"/>
<dbReference type="STRING" id="225849.swp_2698"/>
<dbReference type="KEGG" id="swp:swp_2698"/>
<dbReference type="eggNOG" id="COG0624">
    <property type="taxonomic scope" value="Bacteria"/>
</dbReference>
<dbReference type="HOGENOM" id="CLU_021802_4_0_6"/>
<dbReference type="OrthoDB" id="9809784at2"/>
<dbReference type="UniPathway" id="UPA00034">
    <property type="reaction ID" value="UER00021"/>
</dbReference>
<dbReference type="Proteomes" id="UP000000753">
    <property type="component" value="Chromosome"/>
</dbReference>
<dbReference type="GO" id="GO:0008777">
    <property type="term" value="F:acetylornithine deacetylase activity"/>
    <property type="evidence" value="ECO:0007669"/>
    <property type="project" value="TreeGrafter"/>
</dbReference>
<dbReference type="GO" id="GO:0050897">
    <property type="term" value="F:cobalt ion binding"/>
    <property type="evidence" value="ECO:0007669"/>
    <property type="project" value="UniProtKB-UniRule"/>
</dbReference>
<dbReference type="GO" id="GO:0009014">
    <property type="term" value="F:succinyl-diaminopimelate desuccinylase activity"/>
    <property type="evidence" value="ECO:0007669"/>
    <property type="project" value="UniProtKB-UniRule"/>
</dbReference>
<dbReference type="GO" id="GO:0008270">
    <property type="term" value="F:zinc ion binding"/>
    <property type="evidence" value="ECO:0007669"/>
    <property type="project" value="UniProtKB-UniRule"/>
</dbReference>
<dbReference type="GO" id="GO:0019877">
    <property type="term" value="P:diaminopimelate biosynthetic process"/>
    <property type="evidence" value="ECO:0007669"/>
    <property type="project" value="UniProtKB-UniRule"/>
</dbReference>
<dbReference type="GO" id="GO:0006526">
    <property type="term" value="P:L-arginine biosynthetic process"/>
    <property type="evidence" value="ECO:0007669"/>
    <property type="project" value="TreeGrafter"/>
</dbReference>
<dbReference type="GO" id="GO:0009089">
    <property type="term" value="P:lysine biosynthetic process via diaminopimelate"/>
    <property type="evidence" value="ECO:0007669"/>
    <property type="project" value="UniProtKB-UniRule"/>
</dbReference>
<dbReference type="CDD" id="cd03891">
    <property type="entry name" value="M20_DapE_proteobac"/>
    <property type="match status" value="1"/>
</dbReference>
<dbReference type="FunFam" id="3.30.70.360:FF:000011">
    <property type="entry name" value="Succinyl-diaminopimelate desuccinylase"/>
    <property type="match status" value="1"/>
</dbReference>
<dbReference type="FunFam" id="3.40.630.10:FF:000005">
    <property type="entry name" value="Succinyl-diaminopimelate desuccinylase"/>
    <property type="match status" value="1"/>
</dbReference>
<dbReference type="Gene3D" id="3.40.630.10">
    <property type="entry name" value="Zn peptidases"/>
    <property type="match status" value="2"/>
</dbReference>
<dbReference type="HAMAP" id="MF_01690">
    <property type="entry name" value="DapE"/>
    <property type="match status" value="1"/>
</dbReference>
<dbReference type="InterPro" id="IPR001261">
    <property type="entry name" value="ArgE/DapE_CS"/>
</dbReference>
<dbReference type="InterPro" id="IPR036264">
    <property type="entry name" value="Bact_exopeptidase_dim_dom"/>
</dbReference>
<dbReference type="InterPro" id="IPR005941">
    <property type="entry name" value="DapE_proteobac"/>
</dbReference>
<dbReference type="InterPro" id="IPR002933">
    <property type="entry name" value="Peptidase_M20"/>
</dbReference>
<dbReference type="InterPro" id="IPR011650">
    <property type="entry name" value="Peptidase_M20_dimer"/>
</dbReference>
<dbReference type="InterPro" id="IPR050072">
    <property type="entry name" value="Peptidase_M20A"/>
</dbReference>
<dbReference type="NCBIfam" id="TIGR01246">
    <property type="entry name" value="dapE_proteo"/>
    <property type="match status" value="1"/>
</dbReference>
<dbReference type="NCBIfam" id="NF009557">
    <property type="entry name" value="PRK13009.1"/>
    <property type="match status" value="1"/>
</dbReference>
<dbReference type="PANTHER" id="PTHR43808">
    <property type="entry name" value="ACETYLORNITHINE DEACETYLASE"/>
    <property type="match status" value="1"/>
</dbReference>
<dbReference type="PANTHER" id="PTHR43808:SF31">
    <property type="entry name" value="N-ACETYL-L-CITRULLINE DEACETYLASE"/>
    <property type="match status" value="1"/>
</dbReference>
<dbReference type="Pfam" id="PF07687">
    <property type="entry name" value="M20_dimer"/>
    <property type="match status" value="1"/>
</dbReference>
<dbReference type="Pfam" id="PF01546">
    <property type="entry name" value="Peptidase_M20"/>
    <property type="match status" value="1"/>
</dbReference>
<dbReference type="SUPFAM" id="SSF55031">
    <property type="entry name" value="Bacterial exopeptidase dimerisation domain"/>
    <property type="match status" value="1"/>
</dbReference>
<dbReference type="SUPFAM" id="SSF53187">
    <property type="entry name" value="Zn-dependent exopeptidases"/>
    <property type="match status" value="1"/>
</dbReference>
<dbReference type="PROSITE" id="PS00759">
    <property type="entry name" value="ARGE_DAPE_CPG2_2"/>
    <property type="match status" value="1"/>
</dbReference>
<comment type="function">
    <text evidence="1">Catalyzes the hydrolysis of N-succinyl-L,L-diaminopimelic acid (SDAP), forming succinate and LL-2,6-diaminopimelate (DAP), an intermediate involved in the bacterial biosynthesis of lysine and meso-diaminopimelic acid, an essential component of bacterial cell walls.</text>
</comment>
<comment type="catalytic activity">
    <reaction evidence="1">
        <text>N-succinyl-(2S,6S)-2,6-diaminopimelate + H2O = (2S,6S)-2,6-diaminopimelate + succinate</text>
        <dbReference type="Rhea" id="RHEA:22608"/>
        <dbReference type="ChEBI" id="CHEBI:15377"/>
        <dbReference type="ChEBI" id="CHEBI:30031"/>
        <dbReference type="ChEBI" id="CHEBI:57609"/>
        <dbReference type="ChEBI" id="CHEBI:58087"/>
        <dbReference type="EC" id="3.5.1.18"/>
    </reaction>
</comment>
<comment type="cofactor">
    <cofactor evidence="1">
        <name>Zn(2+)</name>
        <dbReference type="ChEBI" id="CHEBI:29105"/>
    </cofactor>
    <cofactor evidence="1">
        <name>Co(2+)</name>
        <dbReference type="ChEBI" id="CHEBI:48828"/>
    </cofactor>
    <text evidence="1">Binds 2 Zn(2+) or Co(2+) ions per subunit.</text>
</comment>
<comment type="pathway">
    <text evidence="1">Amino-acid biosynthesis; L-lysine biosynthesis via DAP pathway; LL-2,6-diaminopimelate from (S)-tetrahydrodipicolinate (succinylase route): step 3/3.</text>
</comment>
<comment type="subunit">
    <text evidence="1">Homodimer.</text>
</comment>
<comment type="similarity">
    <text evidence="1">Belongs to the peptidase M20A family. DapE subfamily.</text>
</comment>
<proteinExistence type="inferred from homology"/>
<accession>B8CMP0</accession>